<comment type="function">
    <text evidence="1">One of the primary rRNA binding proteins, it binds directly to 16S rRNA where it helps nucleate assembly of the platform of the 30S subunit by binding and bridging several RNA helices of the 16S rRNA.</text>
</comment>
<comment type="function">
    <text evidence="1">Forms an intersubunit bridge (bridge B4) with the 23S rRNA of the 50S subunit in the ribosome.</text>
</comment>
<comment type="subunit">
    <text evidence="1">Part of the 30S ribosomal subunit. Forms a bridge to the 50S subunit in the 70S ribosome, contacting the 23S rRNA.</text>
</comment>
<comment type="similarity">
    <text evidence="1">Belongs to the universal ribosomal protein uS15 family.</text>
</comment>
<proteinExistence type="inferred from homology"/>
<gene>
    <name evidence="1" type="primary">rpsO</name>
    <name type="ordered locus">RBAM_016520</name>
</gene>
<accession>A7Z4T9</accession>
<evidence type="ECO:0000255" key="1">
    <source>
        <dbReference type="HAMAP-Rule" id="MF_01343"/>
    </source>
</evidence>
<evidence type="ECO:0000256" key="2">
    <source>
        <dbReference type="SAM" id="MobiDB-lite"/>
    </source>
</evidence>
<evidence type="ECO:0000305" key="3"/>
<name>RS15_BACVZ</name>
<reference key="1">
    <citation type="journal article" date="2007" name="Nat. Biotechnol.">
        <title>Comparative analysis of the complete genome sequence of the plant growth-promoting bacterium Bacillus amyloliquefaciens FZB42.</title>
        <authorList>
            <person name="Chen X.H."/>
            <person name="Koumoutsi A."/>
            <person name="Scholz R."/>
            <person name="Eisenreich A."/>
            <person name="Schneider K."/>
            <person name="Heinemeyer I."/>
            <person name="Morgenstern B."/>
            <person name="Voss B."/>
            <person name="Hess W.R."/>
            <person name="Reva O."/>
            <person name="Junge H."/>
            <person name="Voigt B."/>
            <person name="Jungblut P.R."/>
            <person name="Vater J."/>
            <person name="Suessmuth R."/>
            <person name="Liesegang H."/>
            <person name="Strittmatter A."/>
            <person name="Gottschalk G."/>
            <person name="Borriss R."/>
        </authorList>
    </citation>
    <scope>NUCLEOTIDE SEQUENCE [LARGE SCALE GENOMIC DNA]</scope>
    <source>
        <strain>DSM 23117 / BGSC 10A6 / LMG 26770 / FZB42</strain>
    </source>
</reference>
<feature type="chain" id="PRO_1000054749" description="Small ribosomal subunit protein uS15">
    <location>
        <begin position="1"/>
        <end position="89"/>
    </location>
</feature>
<feature type="region of interest" description="Disordered" evidence="2">
    <location>
        <begin position="1"/>
        <end position="23"/>
    </location>
</feature>
<feature type="compositionally biased region" description="Basic and acidic residues" evidence="2">
    <location>
        <begin position="1"/>
        <end position="21"/>
    </location>
</feature>
<sequence length="89" mass="10546">MAITQERKNQLISEFKTHESDTGSPEVQIAILTDSINNLNEHLRTHKKDHHSRRGLLKMVGKRRNLLTYLRNKDVTRYRELINKLGLRR</sequence>
<organism>
    <name type="scientific">Bacillus velezensis (strain DSM 23117 / BGSC 10A6 / LMG 26770 / FZB42)</name>
    <name type="common">Bacillus amyloliquefaciens subsp. plantarum</name>
    <dbReference type="NCBI Taxonomy" id="326423"/>
    <lineage>
        <taxon>Bacteria</taxon>
        <taxon>Bacillati</taxon>
        <taxon>Bacillota</taxon>
        <taxon>Bacilli</taxon>
        <taxon>Bacillales</taxon>
        <taxon>Bacillaceae</taxon>
        <taxon>Bacillus</taxon>
        <taxon>Bacillus amyloliquefaciens group</taxon>
    </lineage>
</organism>
<dbReference type="EMBL" id="CP000560">
    <property type="protein sequence ID" value="ABS74015.1"/>
    <property type="molecule type" value="Genomic_DNA"/>
</dbReference>
<dbReference type="RefSeq" id="WP_003154182.1">
    <property type="nucleotide sequence ID" value="NC_009725.2"/>
</dbReference>
<dbReference type="SMR" id="A7Z4T9"/>
<dbReference type="GeneID" id="93080785"/>
<dbReference type="KEGG" id="bay:RBAM_016520"/>
<dbReference type="HOGENOM" id="CLU_148518_0_0_9"/>
<dbReference type="Proteomes" id="UP000001120">
    <property type="component" value="Chromosome"/>
</dbReference>
<dbReference type="GO" id="GO:0022627">
    <property type="term" value="C:cytosolic small ribosomal subunit"/>
    <property type="evidence" value="ECO:0007669"/>
    <property type="project" value="TreeGrafter"/>
</dbReference>
<dbReference type="GO" id="GO:0019843">
    <property type="term" value="F:rRNA binding"/>
    <property type="evidence" value="ECO:0007669"/>
    <property type="project" value="UniProtKB-UniRule"/>
</dbReference>
<dbReference type="GO" id="GO:0003735">
    <property type="term" value="F:structural constituent of ribosome"/>
    <property type="evidence" value="ECO:0007669"/>
    <property type="project" value="InterPro"/>
</dbReference>
<dbReference type="GO" id="GO:0006412">
    <property type="term" value="P:translation"/>
    <property type="evidence" value="ECO:0007669"/>
    <property type="project" value="UniProtKB-UniRule"/>
</dbReference>
<dbReference type="CDD" id="cd00353">
    <property type="entry name" value="Ribosomal_S15p_S13e"/>
    <property type="match status" value="1"/>
</dbReference>
<dbReference type="FunFam" id="1.10.287.10:FF:000002">
    <property type="entry name" value="30S ribosomal protein S15"/>
    <property type="match status" value="1"/>
</dbReference>
<dbReference type="Gene3D" id="6.10.250.3130">
    <property type="match status" value="1"/>
</dbReference>
<dbReference type="Gene3D" id="1.10.287.10">
    <property type="entry name" value="S15/NS1, RNA-binding"/>
    <property type="match status" value="1"/>
</dbReference>
<dbReference type="HAMAP" id="MF_01343_B">
    <property type="entry name" value="Ribosomal_uS15_B"/>
    <property type="match status" value="1"/>
</dbReference>
<dbReference type="InterPro" id="IPR000589">
    <property type="entry name" value="Ribosomal_uS15"/>
</dbReference>
<dbReference type="InterPro" id="IPR005290">
    <property type="entry name" value="Ribosomal_uS15_bac-type"/>
</dbReference>
<dbReference type="InterPro" id="IPR009068">
    <property type="entry name" value="uS15_NS1_RNA-bd_sf"/>
</dbReference>
<dbReference type="NCBIfam" id="TIGR00952">
    <property type="entry name" value="S15_bact"/>
    <property type="match status" value="1"/>
</dbReference>
<dbReference type="PANTHER" id="PTHR23321">
    <property type="entry name" value="RIBOSOMAL PROTEIN S15, BACTERIAL AND ORGANELLAR"/>
    <property type="match status" value="1"/>
</dbReference>
<dbReference type="PANTHER" id="PTHR23321:SF26">
    <property type="entry name" value="SMALL RIBOSOMAL SUBUNIT PROTEIN US15M"/>
    <property type="match status" value="1"/>
</dbReference>
<dbReference type="Pfam" id="PF00312">
    <property type="entry name" value="Ribosomal_S15"/>
    <property type="match status" value="1"/>
</dbReference>
<dbReference type="SMART" id="SM01387">
    <property type="entry name" value="Ribosomal_S15"/>
    <property type="match status" value="1"/>
</dbReference>
<dbReference type="SUPFAM" id="SSF47060">
    <property type="entry name" value="S15/NS1 RNA-binding domain"/>
    <property type="match status" value="1"/>
</dbReference>
<dbReference type="PROSITE" id="PS00362">
    <property type="entry name" value="RIBOSOMAL_S15"/>
    <property type="match status" value="1"/>
</dbReference>
<protein>
    <recommendedName>
        <fullName evidence="1">Small ribosomal subunit protein uS15</fullName>
    </recommendedName>
    <alternativeName>
        <fullName evidence="3">30S ribosomal protein S15</fullName>
    </alternativeName>
</protein>
<keyword id="KW-0687">Ribonucleoprotein</keyword>
<keyword id="KW-0689">Ribosomal protein</keyword>
<keyword id="KW-0694">RNA-binding</keyword>
<keyword id="KW-0699">rRNA-binding</keyword>